<comment type="function">
    <text evidence="5">Non-hemorrhagic metalloproteinase that degrades fibrinogen. The alpha chain (FGA) is rapidly degraded, the beta chain (FGB) is degraded very slowly, while the gamma chain is left intact. Shows a prefential cleavage at X-Leu bonds. Cleaves insulin B chain at '29-His-|-Leu-30', '33-Ser-|-His-34', '38-Ala-|-Leu-39' and '40-Tyr-|-Leu-41' bonds.</text>
</comment>
<comment type="cofactor">
    <cofactor evidence="1">
        <name>Zn(2+)</name>
        <dbReference type="ChEBI" id="CHEBI:29105"/>
    </cofactor>
    <text evidence="1">Binds 1 zinc ion per subunit.</text>
</comment>
<comment type="activity regulation">
    <text evidence="5">Its proteolytic activity is inhibited by EDTA, TPEN, 1,10-phenanthroline, and some thiol compounds, but is enhanced by alkaline earth metal ions (Mg2+, Ca2+, Sr2+, and Ba2+). Its activity is not modulated by urea (4 M).</text>
</comment>
<comment type="biophysicochemical properties">
    <phDependence>
        <text>Optimum pH is 9.5.</text>
    </phDependence>
</comment>
<comment type="subunit">
    <text evidence="1">Monomer.</text>
</comment>
<comment type="subcellular location">
    <subcellularLocation>
        <location>Secreted</location>
    </subcellularLocation>
</comment>
<comment type="tissue specificity">
    <text>Expressed by the venom gland.</text>
</comment>
<comment type="PTM">
    <text evidence="5">Glycosylated (Ref.1).</text>
</comment>
<comment type="miscellaneous">
    <text>The disintegrin domain belongs to the long disintegrin subfamily.</text>
</comment>
<comment type="miscellaneous">
    <text>Negative results: does not show hemorrhagic activity (Ref.1).</text>
</comment>
<comment type="similarity">
    <text evidence="6">Belongs to the venom metalloproteinase (M12B) family. P-III subfamily. P-IIIa sub-subfamily.</text>
</comment>
<accession>P0DM90</accession>
<evidence type="ECO:0000250" key="1"/>
<evidence type="ECO:0000255" key="2">
    <source>
        <dbReference type="PROSITE-ProRule" id="PRU00068"/>
    </source>
</evidence>
<evidence type="ECO:0000255" key="3">
    <source>
        <dbReference type="PROSITE-ProRule" id="PRU00276"/>
    </source>
</evidence>
<evidence type="ECO:0000255" key="4">
    <source>
        <dbReference type="PROSITE-ProRule" id="PRU10095"/>
    </source>
</evidence>
<evidence type="ECO:0000269" key="5">
    <source ref="1"/>
</evidence>
<evidence type="ECO:0000305" key="6"/>
<sequence length="424" mass="46617">QQRYLNAKRYVKLAIVADRSMVTKHNGKLKKLRKWIYRIVNTINEVYRSLNILVALVYLEIWSKEDLINVTSAAKDTLASFGNWRATDLLKRRSHDAAHLLTNIKFDGTTVGKAYVASMCQQDSSVGINQDHSKINLLVALTMAHELGHNLGMSHDVVNTEKQCNCGTCVMAPTISDQISKLFSNCSKNDYENFLTLYKPQCILNEPSKTDIVSPPVCGNELLEVGEECDCGSPETCQNPCCDAATCKLTSGSQCAKGLCCDQCKFSKSGTECRAAKDDCDIAESCTGQSADCPTDDLQRNGQPCGNNAQYCRKGKCPIMTNQCISFYGPNAAVAPDACFDYNLKGEGNFYCRKEQATIFPCAQKDKKCGRLFCVLGPTGKRISCEHTYSQDDPDIGMVLPGTKCADGKVCNSNRECVDVNTAY</sequence>
<name>VM32B_GLOBR</name>
<reference key="1">
    <citation type="journal article" date="2013" name="Fukuoka Univ. Sci. Rep.">
        <title>Characterization of brevilysin H2, an alpha-fibrinogenolytic metalloproteinase from the venom of Chinese snake (Gloydius blomhoffi brevicaudus).</title>
        <authorList>
            <person name="Terada S."/>
            <person name="Hattori T."/>
        </authorList>
    </citation>
    <scope>PROTEIN SEQUENCE</scope>
    <scope>FUNCTION</scope>
    <scope>CATALYTIC ACTIVITY</scope>
    <scope>ACTIVITY REGULATION</scope>
    <scope>GLYCOSYLATION AT ASN-69 AND ASN-185</scope>
    <scope>PYROGLUTAMATE FORMATION AT GLN-1</scope>
    <source>
        <tissue>Venom</tissue>
    </source>
</reference>
<protein>
    <recommendedName>
        <fullName>Zinc metalloproteinase-disintegrin-like brevilysin H2b</fullName>
        <ecNumber>3.4.24.-</ecNumber>
    </recommendedName>
    <alternativeName>
        <fullName>Snake venom metalloproteinase</fullName>
        <shortName>SVMP</shortName>
    </alternativeName>
</protein>
<dbReference type="EC" id="3.4.24.-"/>
<dbReference type="SMR" id="P0DM90"/>
<dbReference type="GO" id="GO:0005576">
    <property type="term" value="C:extracellular region"/>
    <property type="evidence" value="ECO:0007669"/>
    <property type="project" value="UniProtKB-SubCell"/>
</dbReference>
<dbReference type="GO" id="GO:0005886">
    <property type="term" value="C:plasma membrane"/>
    <property type="evidence" value="ECO:0007669"/>
    <property type="project" value="TreeGrafter"/>
</dbReference>
<dbReference type="GO" id="GO:0046872">
    <property type="term" value="F:metal ion binding"/>
    <property type="evidence" value="ECO:0007669"/>
    <property type="project" value="UniProtKB-KW"/>
</dbReference>
<dbReference type="GO" id="GO:0004222">
    <property type="term" value="F:metalloendopeptidase activity"/>
    <property type="evidence" value="ECO:0007669"/>
    <property type="project" value="InterPro"/>
</dbReference>
<dbReference type="GO" id="GO:0090729">
    <property type="term" value="F:toxin activity"/>
    <property type="evidence" value="ECO:0007669"/>
    <property type="project" value="UniProtKB-KW"/>
</dbReference>
<dbReference type="GO" id="GO:0006508">
    <property type="term" value="P:proteolysis"/>
    <property type="evidence" value="ECO:0007669"/>
    <property type="project" value="InterPro"/>
</dbReference>
<dbReference type="CDD" id="cd04269">
    <property type="entry name" value="ZnMc_adamalysin_II_like"/>
    <property type="match status" value="1"/>
</dbReference>
<dbReference type="FunFam" id="3.40.390.10:FF:000002">
    <property type="entry name" value="Disintegrin and metalloproteinase domain-containing protein 22"/>
    <property type="match status" value="1"/>
</dbReference>
<dbReference type="FunFam" id="4.10.70.10:FF:000001">
    <property type="entry name" value="Disintegrin and metalloproteinase domain-containing protein 22"/>
    <property type="match status" value="1"/>
</dbReference>
<dbReference type="Gene3D" id="3.40.390.10">
    <property type="entry name" value="Collagenase (Catalytic Domain)"/>
    <property type="match status" value="1"/>
</dbReference>
<dbReference type="Gene3D" id="4.10.70.10">
    <property type="entry name" value="Disintegrin domain"/>
    <property type="match status" value="1"/>
</dbReference>
<dbReference type="InterPro" id="IPR006586">
    <property type="entry name" value="ADAM_Cys-rich"/>
</dbReference>
<dbReference type="InterPro" id="IPR018358">
    <property type="entry name" value="Disintegrin_CS"/>
</dbReference>
<dbReference type="InterPro" id="IPR001762">
    <property type="entry name" value="Disintegrin_dom"/>
</dbReference>
<dbReference type="InterPro" id="IPR036436">
    <property type="entry name" value="Disintegrin_dom_sf"/>
</dbReference>
<dbReference type="InterPro" id="IPR024079">
    <property type="entry name" value="MetalloPept_cat_dom_sf"/>
</dbReference>
<dbReference type="InterPro" id="IPR001590">
    <property type="entry name" value="Peptidase_M12B"/>
</dbReference>
<dbReference type="InterPro" id="IPR034027">
    <property type="entry name" value="Reprolysin_adamalysin"/>
</dbReference>
<dbReference type="PANTHER" id="PTHR11905">
    <property type="entry name" value="ADAM A DISINTEGRIN AND METALLOPROTEASE DOMAIN"/>
    <property type="match status" value="1"/>
</dbReference>
<dbReference type="PANTHER" id="PTHR11905:SF32">
    <property type="entry name" value="DISINTEGRIN AND METALLOPROTEINASE DOMAIN-CONTAINING PROTEIN 28"/>
    <property type="match status" value="1"/>
</dbReference>
<dbReference type="Pfam" id="PF08516">
    <property type="entry name" value="ADAM_CR"/>
    <property type="match status" value="1"/>
</dbReference>
<dbReference type="Pfam" id="PF00200">
    <property type="entry name" value="Disintegrin"/>
    <property type="match status" value="1"/>
</dbReference>
<dbReference type="Pfam" id="PF01421">
    <property type="entry name" value="Reprolysin"/>
    <property type="match status" value="1"/>
</dbReference>
<dbReference type="PRINTS" id="PR00289">
    <property type="entry name" value="DISINTEGRIN"/>
</dbReference>
<dbReference type="SMART" id="SM00608">
    <property type="entry name" value="ACR"/>
    <property type="match status" value="1"/>
</dbReference>
<dbReference type="SMART" id="SM00050">
    <property type="entry name" value="DISIN"/>
    <property type="match status" value="1"/>
</dbReference>
<dbReference type="SUPFAM" id="SSF57552">
    <property type="entry name" value="Blood coagulation inhibitor (disintegrin)"/>
    <property type="match status" value="1"/>
</dbReference>
<dbReference type="SUPFAM" id="SSF55486">
    <property type="entry name" value="Metalloproteases ('zincins'), catalytic domain"/>
    <property type="match status" value="1"/>
</dbReference>
<dbReference type="PROSITE" id="PS50215">
    <property type="entry name" value="ADAM_MEPRO"/>
    <property type="match status" value="1"/>
</dbReference>
<dbReference type="PROSITE" id="PS00427">
    <property type="entry name" value="DISINTEGRIN_1"/>
    <property type="match status" value="1"/>
</dbReference>
<dbReference type="PROSITE" id="PS50214">
    <property type="entry name" value="DISINTEGRIN_2"/>
    <property type="match status" value="1"/>
</dbReference>
<dbReference type="PROSITE" id="PS00142">
    <property type="entry name" value="ZINC_PROTEASE"/>
    <property type="match status" value="1"/>
</dbReference>
<feature type="chain" id="PRO_0000424621" description="Zinc metalloproteinase-disintegrin-like brevilysin H2b">
    <location>
        <begin position="1"/>
        <end position="424"/>
    </location>
</feature>
<feature type="domain" description="Peptidase M12B" evidence="3">
    <location>
        <begin position="9"/>
        <end position="207"/>
    </location>
</feature>
<feature type="domain" description="Disintegrin" evidence="2">
    <location>
        <begin position="215"/>
        <end position="301"/>
    </location>
</feature>
<feature type="short sequence motif" description="D/ECD-tripeptide">
    <location>
        <begin position="279"/>
        <end position="281"/>
    </location>
</feature>
<feature type="active site" evidence="3 4">
    <location>
        <position position="146"/>
    </location>
</feature>
<feature type="binding site" evidence="1">
    <location>
        <position position="96"/>
    </location>
    <ligand>
        <name>Ca(2+)</name>
        <dbReference type="ChEBI" id="CHEBI:29108"/>
        <label>1</label>
    </ligand>
</feature>
<feature type="binding site" evidence="1">
    <location>
        <position position="145"/>
    </location>
    <ligand>
        <name>Zn(2+)</name>
        <dbReference type="ChEBI" id="CHEBI:29105"/>
        <note>catalytic</note>
    </ligand>
</feature>
<feature type="binding site" evidence="1">
    <location>
        <position position="149"/>
    </location>
    <ligand>
        <name>Zn(2+)</name>
        <dbReference type="ChEBI" id="CHEBI:29105"/>
        <note>catalytic</note>
    </ligand>
</feature>
<feature type="binding site" evidence="1">
    <location>
        <position position="155"/>
    </location>
    <ligand>
        <name>Zn(2+)</name>
        <dbReference type="ChEBI" id="CHEBI:29105"/>
        <note>catalytic</note>
    </ligand>
</feature>
<feature type="binding site" evidence="1">
    <location>
        <position position="202"/>
    </location>
    <ligand>
        <name>Ca(2+)</name>
        <dbReference type="ChEBI" id="CHEBI:29108"/>
        <label>1</label>
    </ligand>
</feature>
<feature type="binding site" evidence="1">
    <location>
        <position position="205"/>
    </location>
    <ligand>
        <name>Ca(2+)</name>
        <dbReference type="ChEBI" id="CHEBI:29108"/>
        <label>1</label>
    </ligand>
</feature>
<feature type="binding site" evidence="1">
    <location>
        <position position="217"/>
    </location>
    <ligand>
        <name>Ca(2+)</name>
        <dbReference type="ChEBI" id="CHEBI:29108"/>
        <label>2</label>
    </ligand>
</feature>
<feature type="binding site" evidence="1">
    <location>
        <position position="220"/>
    </location>
    <ligand>
        <name>Ca(2+)</name>
        <dbReference type="ChEBI" id="CHEBI:29108"/>
        <label>2</label>
    </ligand>
</feature>
<feature type="binding site" evidence="1">
    <location>
        <position position="222"/>
    </location>
    <ligand>
        <name>Ca(2+)</name>
        <dbReference type="ChEBI" id="CHEBI:29108"/>
        <label>2</label>
    </ligand>
</feature>
<feature type="binding site" evidence="1">
    <location>
        <position position="224"/>
    </location>
    <ligand>
        <name>Ca(2+)</name>
        <dbReference type="ChEBI" id="CHEBI:29108"/>
        <label>2</label>
    </ligand>
</feature>
<feature type="binding site" evidence="1">
    <location>
        <position position="227"/>
    </location>
    <ligand>
        <name>Ca(2+)</name>
        <dbReference type="ChEBI" id="CHEBI:29108"/>
        <label>2</label>
    </ligand>
</feature>
<feature type="binding site" evidence="1">
    <location>
        <position position="230"/>
    </location>
    <ligand>
        <name>Ca(2+)</name>
        <dbReference type="ChEBI" id="CHEBI:29108"/>
        <label>2</label>
    </ligand>
</feature>
<feature type="binding site" evidence="1">
    <location>
        <position position="281"/>
    </location>
    <ligand>
        <name>Ca(2+)</name>
        <dbReference type="ChEBI" id="CHEBI:29108"/>
        <label>3</label>
    </ligand>
</feature>
<feature type="binding site" evidence="1">
    <location>
        <position position="284"/>
    </location>
    <ligand>
        <name>Ca(2+)</name>
        <dbReference type="ChEBI" id="CHEBI:29108"/>
        <label>3</label>
    </ligand>
</feature>
<feature type="binding site" evidence="1">
    <location>
        <position position="296"/>
    </location>
    <ligand>
        <name>Ca(2+)</name>
        <dbReference type="ChEBI" id="CHEBI:29108"/>
        <label>3</label>
    </ligand>
</feature>
<feature type="modified residue" description="Pyrrolidone carboxylic acid" evidence="5">
    <location>
        <position position="1"/>
    </location>
</feature>
<feature type="glycosylation site" description="N-linked (GlcNAc...) asparagine" evidence="5">
    <location>
        <position position="69"/>
    </location>
</feature>
<feature type="glycosylation site" description="N-linked (GlcNAc...) asparagine" evidence="5">
    <location>
        <position position="185"/>
    </location>
</feature>
<feature type="disulfide bond" evidence="1">
    <location>
        <begin position="120"/>
        <end position="202"/>
    </location>
</feature>
<feature type="disulfide bond" evidence="1">
    <location>
        <begin position="164"/>
        <end position="186"/>
    </location>
</feature>
<feature type="disulfide bond" evidence="1">
    <location>
        <begin position="166"/>
        <end position="169"/>
    </location>
</feature>
<feature type="disulfide bond" evidence="1">
    <location>
        <begin position="218"/>
        <end position="247"/>
    </location>
</feature>
<feature type="disulfide bond" evidence="1">
    <location>
        <begin position="229"/>
        <end position="242"/>
    </location>
</feature>
<feature type="disulfide bond" evidence="1">
    <location>
        <begin position="231"/>
        <end position="237"/>
    </location>
</feature>
<feature type="disulfide bond" evidence="1">
    <location>
        <begin position="241"/>
        <end position="264"/>
    </location>
</feature>
<feature type="disulfide bond" evidence="1">
    <location>
        <begin position="255"/>
        <end position="261"/>
    </location>
</feature>
<feature type="disulfide bond" evidence="1">
    <location>
        <begin position="260"/>
        <end position="286"/>
    </location>
</feature>
<feature type="disulfide bond" evidence="1">
    <location>
        <begin position="273"/>
        <end position="293"/>
    </location>
</feature>
<feature type="disulfide bond" evidence="1">
    <location>
        <begin position="280"/>
        <end position="312"/>
    </location>
</feature>
<feature type="disulfide bond" evidence="1">
    <location>
        <begin position="305"/>
        <end position="317"/>
    </location>
</feature>
<feature type="disulfide bond" evidence="1">
    <location>
        <begin position="324"/>
        <end position="374"/>
    </location>
</feature>
<feature type="disulfide bond" evidence="1">
    <location>
        <begin position="339"/>
        <end position="385"/>
    </location>
</feature>
<feature type="disulfide bond" evidence="1">
    <location>
        <begin position="352"/>
        <end position="362"/>
    </location>
</feature>
<feature type="disulfide bond" evidence="1">
    <location>
        <begin position="369"/>
        <end position="411"/>
    </location>
</feature>
<feature type="disulfide bond" evidence="1">
    <location>
        <begin position="405"/>
        <end position="417"/>
    </location>
</feature>
<feature type="unsure residue" description="Assigned by comparison with orthologs">
    <location>
        <position position="69"/>
    </location>
</feature>
<feature type="unsure residue" description="Assigned by comparison with orthologs">
    <location>
        <position position="185"/>
    </location>
</feature>
<organism>
    <name type="scientific">Gloydius brevicauda</name>
    <name type="common">Korean slamosa snake</name>
    <name type="synonym">Agkistrodon halys brevicaudus</name>
    <dbReference type="NCBI Taxonomy" id="3148161"/>
    <lineage>
        <taxon>Eukaryota</taxon>
        <taxon>Metazoa</taxon>
        <taxon>Chordata</taxon>
        <taxon>Craniata</taxon>
        <taxon>Vertebrata</taxon>
        <taxon>Euteleostomi</taxon>
        <taxon>Lepidosauria</taxon>
        <taxon>Squamata</taxon>
        <taxon>Bifurcata</taxon>
        <taxon>Unidentata</taxon>
        <taxon>Episquamata</taxon>
        <taxon>Toxicofera</taxon>
        <taxon>Serpentes</taxon>
        <taxon>Colubroidea</taxon>
        <taxon>Viperidae</taxon>
        <taxon>Crotalinae</taxon>
        <taxon>Gloydius</taxon>
    </lineage>
</organism>
<keyword id="KW-0903">Direct protein sequencing</keyword>
<keyword id="KW-1015">Disulfide bond</keyword>
<keyword id="KW-1206">Fibrinogenolytic toxin</keyword>
<keyword id="KW-0325">Glycoprotein</keyword>
<keyword id="KW-1199">Hemostasis impairing toxin</keyword>
<keyword id="KW-0378">Hydrolase</keyword>
<keyword id="KW-0479">Metal-binding</keyword>
<keyword id="KW-0873">Pyrrolidone carboxylic acid</keyword>
<keyword id="KW-0964">Secreted</keyword>
<keyword id="KW-0800">Toxin</keyword>
<keyword id="KW-0862">Zinc</keyword>
<proteinExistence type="evidence at protein level"/>